<comment type="function">
    <text evidence="1">Carrier of the growing fatty acid chain in fatty acid biosynthesis.</text>
</comment>
<comment type="pathway">
    <text evidence="1">Lipid metabolism; fatty acid biosynthesis.</text>
</comment>
<comment type="subcellular location">
    <subcellularLocation>
        <location evidence="1">Cytoplasm</location>
    </subcellularLocation>
</comment>
<comment type="PTM">
    <text evidence="1">4'-phosphopantetheine is transferred from CoA to a specific serine of apo-ACP by AcpS. This modification is essential for activity because fatty acids are bound in thioester linkage to the sulfhydryl of the prosthetic group.</text>
</comment>
<comment type="similarity">
    <text evidence="1">Belongs to the acyl carrier protein (ACP) family.</text>
</comment>
<sequence length="87" mass="9475">MSNPTVLDQIRHIIAQALDKPVETIHAEQSFRRDLGADSLDSVEIVMAIEDQFAVEFDEDSTAAVDTVQDLVTYIEAALASRGAQTA</sequence>
<keyword id="KW-0963">Cytoplasm</keyword>
<keyword id="KW-0275">Fatty acid biosynthesis</keyword>
<keyword id="KW-0276">Fatty acid metabolism</keyword>
<keyword id="KW-0444">Lipid biosynthesis</keyword>
<keyword id="KW-0443">Lipid metabolism</keyword>
<keyword id="KW-0596">Phosphopantetheine</keyword>
<keyword id="KW-0597">Phosphoprotein</keyword>
<keyword id="KW-0614">Plasmid</keyword>
<keyword id="KW-1185">Reference proteome</keyword>
<gene>
    <name evidence="1" type="primary">acpP3</name>
    <name type="ordered locus">RSp1659</name>
    <name type="ORF">RS02218</name>
</gene>
<evidence type="ECO:0000255" key="1">
    <source>
        <dbReference type="HAMAP-Rule" id="MF_01217"/>
    </source>
</evidence>
<evidence type="ECO:0000255" key="2">
    <source>
        <dbReference type="PROSITE-ProRule" id="PRU00258"/>
    </source>
</evidence>
<accession>Q8XPI1</accession>
<organism>
    <name type="scientific">Ralstonia nicotianae (strain ATCC BAA-1114 / GMI1000)</name>
    <name type="common">Ralstonia solanacearum</name>
    <dbReference type="NCBI Taxonomy" id="267608"/>
    <lineage>
        <taxon>Bacteria</taxon>
        <taxon>Pseudomonadati</taxon>
        <taxon>Pseudomonadota</taxon>
        <taxon>Betaproteobacteria</taxon>
        <taxon>Burkholderiales</taxon>
        <taxon>Burkholderiaceae</taxon>
        <taxon>Ralstonia</taxon>
        <taxon>Ralstonia solanacearum species complex</taxon>
    </lineage>
</organism>
<name>ACP3_RALN1</name>
<protein>
    <recommendedName>
        <fullName evidence="1">Acyl carrier protein 3</fullName>
        <shortName evidence="1">ACP 3</shortName>
    </recommendedName>
</protein>
<geneLocation type="plasmid">
    <name>megaplasmid Rsp</name>
</geneLocation>
<proteinExistence type="inferred from homology"/>
<dbReference type="EMBL" id="AL646053">
    <property type="protein sequence ID" value="CAD18810.1"/>
    <property type="molecule type" value="Genomic_DNA"/>
</dbReference>
<dbReference type="SMR" id="Q8XPI1"/>
<dbReference type="STRING" id="267608.RSp1659"/>
<dbReference type="EnsemblBacteria" id="CAD18810">
    <property type="protein sequence ID" value="CAD18810"/>
    <property type="gene ID" value="RSp1659"/>
</dbReference>
<dbReference type="KEGG" id="rso:RSp1659"/>
<dbReference type="eggNOG" id="COG0236">
    <property type="taxonomic scope" value="Bacteria"/>
</dbReference>
<dbReference type="HOGENOM" id="CLU_108696_5_1_4"/>
<dbReference type="UniPathway" id="UPA00094"/>
<dbReference type="PHI-base" id="PHI:123515"/>
<dbReference type="Proteomes" id="UP000001436">
    <property type="component" value="Plasmid megaplasmid Rsp"/>
</dbReference>
<dbReference type="GO" id="GO:0005737">
    <property type="term" value="C:cytoplasm"/>
    <property type="evidence" value="ECO:0007669"/>
    <property type="project" value="UniProtKB-SubCell"/>
</dbReference>
<dbReference type="GO" id="GO:0000035">
    <property type="term" value="F:acyl binding"/>
    <property type="evidence" value="ECO:0007669"/>
    <property type="project" value="TreeGrafter"/>
</dbReference>
<dbReference type="GO" id="GO:0000036">
    <property type="term" value="F:acyl carrier activity"/>
    <property type="evidence" value="ECO:0007669"/>
    <property type="project" value="UniProtKB-UniRule"/>
</dbReference>
<dbReference type="Gene3D" id="1.10.1200.10">
    <property type="entry name" value="ACP-like"/>
    <property type="match status" value="1"/>
</dbReference>
<dbReference type="HAMAP" id="MF_01217">
    <property type="entry name" value="Acyl_carrier"/>
    <property type="match status" value="1"/>
</dbReference>
<dbReference type="InterPro" id="IPR003231">
    <property type="entry name" value="ACP"/>
</dbReference>
<dbReference type="InterPro" id="IPR036736">
    <property type="entry name" value="ACP-like_sf"/>
</dbReference>
<dbReference type="InterPro" id="IPR009081">
    <property type="entry name" value="PP-bd_ACP"/>
</dbReference>
<dbReference type="InterPro" id="IPR006162">
    <property type="entry name" value="Ppantetheine_attach_site"/>
</dbReference>
<dbReference type="NCBIfam" id="TIGR00517">
    <property type="entry name" value="acyl_carrier"/>
    <property type="match status" value="1"/>
</dbReference>
<dbReference type="NCBIfam" id="NF002148">
    <property type="entry name" value="PRK00982.1-2"/>
    <property type="match status" value="1"/>
</dbReference>
<dbReference type="NCBIfam" id="NF002150">
    <property type="entry name" value="PRK00982.1-4"/>
    <property type="match status" value="1"/>
</dbReference>
<dbReference type="PANTHER" id="PTHR20863">
    <property type="entry name" value="ACYL CARRIER PROTEIN"/>
    <property type="match status" value="1"/>
</dbReference>
<dbReference type="PANTHER" id="PTHR20863:SF76">
    <property type="entry name" value="CARRIER DOMAIN-CONTAINING PROTEIN"/>
    <property type="match status" value="1"/>
</dbReference>
<dbReference type="Pfam" id="PF00550">
    <property type="entry name" value="PP-binding"/>
    <property type="match status" value="1"/>
</dbReference>
<dbReference type="SUPFAM" id="SSF47336">
    <property type="entry name" value="ACP-like"/>
    <property type="match status" value="1"/>
</dbReference>
<dbReference type="PROSITE" id="PS50075">
    <property type="entry name" value="CARRIER"/>
    <property type="match status" value="1"/>
</dbReference>
<dbReference type="PROSITE" id="PS00012">
    <property type="entry name" value="PHOSPHOPANTETHEINE"/>
    <property type="match status" value="1"/>
</dbReference>
<feature type="chain" id="PRO_0000180173" description="Acyl carrier protein 3">
    <location>
        <begin position="1"/>
        <end position="87"/>
    </location>
</feature>
<feature type="domain" description="Carrier" evidence="2">
    <location>
        <begin position="1"/>
        <end position="79"/>
    </location>
</feature>
<feature type="modified residue" description="O-(pantetheine 4'-phosphoryl)serine" evidence="2">
    <location>
        <position position="39"/>
    </location>
</feature>
<reference key="1">
    <citation type="journal article" date="2002" name="Nature">
        <title>Genome sequence of the plant pathogen Ralstonia solanacearum.</title>
        <authorList>
            <person name="Salanoubat M."/>
            <person name="Genin S."/>
            <person name="Artiguenave F."/>
            <person name="Gouzy J."/>
            <person name="Mangenot S."/>
            <person name="Arlat M."/>
            <person name="Billault A."/>
            <person name="Brottier P."/>
            <person name="Camus J.-C."/>
            <person name="Cattolico L."/>
            <person name="Chandler M."/>
            <person name="Choisne N."/>
            <person name="Claudel-Renard C."/>
            <person name="Cunnac S."/>
            <person name="Demange N."/>
            <person name="Gaspin C."/>
            <person name="Lavie M."/>
            <person name="Moisan A."/>
            <person name="Robert C."/>
            <person name="Saurin W."/>
            <person name="Schiex T."/>
            <person name="Siguier P."/>
            <person name="Thebault P."/>
            <person name="Whalen M."/>
            <person name="Wincker P."/>
            <person name="Levy M."/>
            <person name="Weissenbach J."/>
            <person name="Boucher C.A."/>
        </authorList>
    </citation>
    <scope>NUCLEOTIDE SEQUENCE [LARGE SCALE GENOMIC DNA]</scope>
    <source>
        <strain>ATCC BAA-1114 / GMI1000</strain>
    </source>
</reference>